<accession>Q31I07</accession>
<feature type="chain" id="PRO_0000350507" description="Dual-specificity RNA methyltransferase RlmN">
    <location>
        <begin position="1"/>
        <end position="370"/>
    </location>
</feature>
<feature type="domain" description="Radical SAM core" evidence="2">
    <location>
        <begin position="103"/>
        <end position="340"/>
    </location>
</feature>
<feature type="active site" description="Proton acceptor" evidence="1">
    <location>
        <position position="97"/>
    </location>
</feature>
<feature type="active site" description="S-methylcysteine intermediate" evidence="1">
    <location>
        <position position="345"/>
    </location>
</feature>
<feature type="binding site" evidence="1">
    <location>
        <position position="117"/>
    </location>
    <ligand>
        <name>[4Fe-4S] cluster</name>
        <dbReference type="ChEBI" id="CHEBI:49883"/>
        <note>4Fe-4S-S-AdoMet</note>
    </ligand>
</feature>
<feature type="binding site" evidence="1">
    <location>
        <position position="121"/>
    </location>
    <ligand>
        <name>[4Fe-4S] cluster</name>
        <dbReference type="ChEBI" id="CHEBI:49883"/>
        <note>4Fe-4S-S-AdoMet</note>
    </ligand>
</feature>
<feature type="binding site" evidence="1">
    <location>
        <position position="124"/>
    </location>
    <ligand>
        <name>[4Fe-4S] cluster</name>
        <dbReference type="ChEBI" id="CHEBI:49883"/>
        <note>4Fe-4S-S-AdoMet</note>
    </ligand>
</feature>
<feature type="binding site" evidence="1">
    <location>
        <begin position="170"/>
        <end position="171"/>
    </location>
    <ligand>
        <name>S-adenosyl-L-methionine</name>
        <dbReference type="ChEBI" id="CHEBI:59789"/>
    </ligand>
</feature>
<feature type="binding site" evidence="1">
    <location>
        <position position="202"/>
    </location>
    <ligand>
        <name>S-adenosyl-L-methionine</name>
        <dbReference type="ChEBI" id="CHEBI:59789"/>
    </ligand>
</feature>
<feature type="binding site" evidence="1">
    <location>
        <begin position="224"/>
        <end position="226"/>
    </location>
    <ligand>
        <name>S-adenosyl-L-methionine</name>
        <dbReference type="ChEBI" id="CHEBI:59789"/>
    </ligand>
</feature>
<feature type="binding site" evidence="1">
    <location>
        <position position="302"/>
    </location>
    <ligand>
        <name>S-adenosyl-L-methionine</name>
        <dbReference type="ChEBI" id="CHEBI:59789"/>
    </ligand>
</feature>
<feature type="disulfide bond" description="(transient)" evidence="1">
    <location>
        <begin position="110"/>
        <end position="345"/>
    </location>
</feature>
<name>RLMN_HYDCU</name>
<gene>
    <name evidence="1" type="primary">rlmN</name>
    <name type="ordered locus">Tcr_0620</name>
</gene>
<protein>
    <recommendedName>
        <fullName evidence="1">Dual-specificity RNA methyltransferase RlmN</fullName>
        <ecNumber evidence="1">2.1.1.192</ecNumber>
    </recommendedName>
    <alternativeName>
        <fullName evidence="1">23S rRNA (adenine(2503)-C(2))-methyltransferase</fullName>
    </alternativeName>
    <alternativeName>
        <fullName evidence="1">23S rRNA m2A2503 methyltransferase</fullName>
    </alternativeName>
    <alternativeName>
        <fullName evidence="1">Ribosomal RNA large subunit methyltransferase N</fullName>
    </alternativeName>
    <alternativeName>
        <fullName evidence="1">tRNA (adenine(37)-C(2))-methyltransferase</fullName>
    </alternativeName>
    <alternativeName>
        <fullName evidence="1">tRNA m2A37 methyltransferase</fullName>
    </alternativeName>
</protein>
<keyword id="KW-0004">4Fe-4S</keyword>
<keyword id="KW-0963">Cytoplasm</keyword>
<keyword id="KW-1015">Disulfide bond</keyword>
<keyword id="KW-0408">Iron</keyword>
<keyword id="KW-0411">Iron-sulfur</keyword>
<keyword id="KW-0479">Metal-binding</keyword>
<keyword id="KW-0489">Methyltransferase</keyword>
<keyword id="KW-0698">rRNA processing</keyword>
<keyword id="KW-0949">S-adenosyl-L-methionine</keyword>
<keyword id="KW-0808">Transferase</keyword>
<keyword id="KW-0819">tRNA processing</keyword>
<organism>
    <name type="scientific">Hydrogenovibrio crunogenus (strain DSM 25203 / XCL-2)</name>
    <name type="common">Thiomicrospira crunogena</name>
    <dbReference type="NCBI Taxonomy" id="317025"/>
    <lineage>
        <taxon>Bacteria</taxon>
        <taxon>Pseudomonadati</taxon>
        <taxon>Pseudomonadota</taxon>
        <taxon>Gammaproteobacteria</taxon>
        <taxon>Thiotrichales</taxon>
        <taxon>Piscirickettsiaceae</taxon>
        <taxon>Hydrogenovibrio</taxon>
    </lineage>
</organism>
<sequence>MSDKIKDKVDLLGMDRAELTEFFASIGEKPFRAAQVMKWIHQFGVSDFEEMTNISKSLREKLSKTALIRTPKIVSEQRSADGTIKWLLEVDNHNCVEAVFIPEKSRGTLCISSQVGCALECSFCSTGQQGFNRNLENWEIVAQMWVANKALGCKPKEERIISNVVFMGMGEPLLNVKHTFPTARILMDDNAYGLSKRRVTISTAGVVPAIDKIKESLDVSLAISLHAPNNALRDELVPINKKYPLEVLMPALHRYVEGGHSKKHVTVEYVMLDHVNDRLEHAQQLIELLGDLPCKVNLIPFNPFPNTDYKRSSNNAVHRFKDALMEAGVNCTVRRTRGDDIDAACGQLAGKVKDRTKRTLQTVNLDKLHG</sequence>
<proteinExistence type="inferred from homology"/>
<comment type="function">
    <text evidence="1">Specifically methylates position 2 of adenine 2503 in 23S rRNA and position 2 of adenine 37 in tRNAs. m2A2503 modification seems to play a crucial role in the proofreading step occurring at the peptidyl transferase center and thus would serve to optimize ribosomal fidelity.</text>
</comment>
<comment type="catalytic activity">
    <reaction evidence="1">
        <text>adenosine(2503) in 23S rRNA + 2 reduced [2Fe-2S]-[ferredoxin] + 2 S-adenosyl-L-methionine = 2-methyladenosine(2503) in 23S rRNA + 5'-deoxyadenosine + L-methionine + 2 oxidized [2Fe-2S]-[ferredoxin] + S-adenosyl-L-homocysteine</text>
        <dbReference type="Rhea" id="RHEA:42916"/>
        <dbReference type="Rhea" id="RHEA-COMP:10000"/>
        <dbReference type="Rhea" id="RHEA-COMP:10001"/>
        <dbReference type="Rhea" id="RHEA-COMP:10152"/>
        <dbReference type="Rhea" id="RHEA-COMP:10282"/>
        <dbReference type="ChEBI" id="CHEBI:17319"/>
        <dbReference type="ChEBI" id="CHEBI:33737"/>
        <dbReference type="ChEBI" id="CHEBI:33738"/>
        <dbReference type="ChEBI" id="CHEBI:57844"/>
        <dbReference type="ChEBI" id="CHEBI:57856"/>
        <dbReference type="ChEBI" id="CHEBI:59789"/>
        <dbReference type="ChEBI" id="CHEBI:74411"/>
        <dbReference type="ChEBI" id="CHEBI:74497"/>
        <dbReference type="EC" id="2.1.1.192"/>
    </reaction>
</comment>
<comment type="catalytic activity">
    <reaction evidence="1">
        <text>adenosine(37) in tRNA + 2 reduced [2Fe-2S]-[ferredoxin] + 2 S-adenosyl-L-methionine = 2-methyladenosine(37) in tRNA + 5'-deoxyadenosine + L-methionine + 2 oxidized [2Fe-2S]-[ferredoxin] + S-adenosyl-L-homocysteine</text>
        <dbReference type="Rhea" id="RHEA:43332"/>
        <dbReference type="Rhea" id="RHEA-COMP:10000"/>
        <dbReference type="Rhea" id="RHEA-COMP:10001"/>
        <dbReference type="Rhea" id="RHEA-COMP:10162"/>
        <dbReference type="Rhea" id="RHEA-COMP:10485"/>
        <dbReference type="ChEBI" id="CHEBI:17319"/>
        <dbReference type="ChEBI" id="CHEBI:33737"/>
        <dbReference type="ChEBI" id="CHEBI:33738"/>
        <dbReference type="ChEBI" id="CHEBI:57844"/>
        <dbReference type="ChEBI" id="CHEBI:57856"/>
        <dbReference type="ChEBI" id="CHEBI:59789"/>
        <dbReference type="ChEBI" id="CHEBI:74411"/>
        <dbReference type="ChEBI" id="CHEBI:74497"/>
        <dbReference type="EC" id="2.1.1.192"/>
    </reaction>
</comment>
<comment type="cofactor">
    <cofactor evidence="1">
        <name>[4Fe-4S] cluster</name>
        <dbReference type="ChEBI" id="CHEBI:49883"/>
    </cofactor>
    <text evidence="1">Binds 1 [4Fe-4S] cluster. The cluster is coordinated with 3 cysteines and an exchangeable S-adenosyl-L-methionine.</text>
</comment>
<comment type="subcellular location">
    <subcellularLocation>
        <location evidence="1">Cytoplasm</location>
    </subcellularLocation>
</comment>
<comment type="miscellaneous">
    <text evidence="1">Reaction proceeds by a ping-pong mechanism involving intermediate methylation of a conserved cysteine residue.</text>
</comment>
<comment type="similarity">
    <text evidence="1">Belongs to the radical SAM superfamily. RlmN family.</text>
</comment>
<reference key="1">
    <citation type="journal article" date="2006" name="PLoS Biol.">
        <title>The genome of deep-sea vent chemolithoautotroph Thiomicrospira crunogena XCL-2.</title>
        <authorList>
            <person name="Scott K.M."/>
            <person name="Sievert S.M."/>
            <person name="Abril F.N."/>
            <person name="Ball L.A."/>
            <person name="Barrett C.J."/>
            <person name="Blake R.A."/>
            <person name="Boller A.J."/>
            <person name="Chain P.S.G."/>
            <person name="Clark J.A."/>
            <person name="Davis C.R."/>
            <person name="Detter C."/>
            <person name="Do K.F."/>
            <person name="Dobrinski K.P."/>
            <person name="Faza B.I."/>
            <person name="Fitzpatrick K.A."/>
            <person name="Freyermuth S.K."/>
            <person name="Harmer T.L."/>
            <person name="Hauser L.J."/>
            <person name="Huegler M."/>
            <person name="Kerfeld C.A."/>
            <person name="Klotz M.G."/>
            <person name="Kong W.W."/>
            <person name="Land M."/>
            <person name="Lapidus A."/>
            <person name="Larimer F.W."/>
            <person name="Longo D.L."/>
            <person name="Lucas S."/>
            <person name="Malfatti S.A."/>
            <person name="Massey S.E."/>
            <person name="Martin D.D."/>
            <person name="McCuddin Z."/>
            <person name="Meyer F."/>
            <person name="Moore J.L."/>
            <person name="Ocampo L.H. Jr."/>
            <person name="Paul J.H."/>
            <person name="Paulsen I.T."/>
            <person name="Reep D.K."/>
            <person name="Ren Q."/>
            <person name="Ross R.L."/>
            <person name="Sato P.Y."/>
            <person name="Thomas P."/>
            <person name="Tinkham L.E."/>
            <person name="Zeruth G.T."/>
        </authorList>
    </citation>
    <scope>NUCLEOTIDE SEQUENCE [LARGE SCALE GENOMIC DNA]</scope>
    <source>
        <strain>DSM 25203 / XCL-2</strain>
    </source>
</reference>
<evidence type="ECO:0000255" key="1">
    <source>
        <dbReference type="HAMAP-Rule" id="MF_01849"/>
    </source>
</evidence>
<evidence type="ECO:0000255" key="2">
    <source>
        <dbReference type="PROSITE-ProRule" id="PRU01266"/>
    </source>
</evidence>
<dbReference type="EC" id="2.1.1.192" evidence="1"/>
<dbReference type="EMBL" id="CP000109">
    <property type="protein sequence ID" value="ABB41216.1"/>
    <property type="molecule type" value="Genomic_DNA"/>
</dbReference>
<dbReference type="SMR" id="Q31I07"/>
<dbReference type="STRING" id="317025.Tcr_0620"/>
<dbReference type="KEGG" id="tcx:Tcr_0620"/>
<dbReference type="eggNOG" id="COG0820">
    <property type="taxonomic scope" value="Bacteria"/>
</dbReference>
<dbReference type="HOGENOM" id="CLU_029101_0_0_6"/>
<dbReference type="OrthoDB" id="9793973at2"/>
<dbReference type="GO" id="GO:0005737">
    <property type="term" value="C:cytoplasm"/>
    <property type="evidence" value="ECO:0007669"/>
    <property type="project" value="UniProtKB-SubCell"/>
</dbReference>
<dbReference type="GO" id="GO:0051539">
    <property type="term" value="F:4 iron, 4 sulfur cluster binding"/>
    <property type="evidence" value="ECO:0007669"/>
    <property type="project" value="UniProtKB-UniRule"/>
</dbReference>
<dbReference type="GO" id="GO:0046872">
    <property type="term" value="F:metal ion binding"/>
    <property type="evidence" value="ECO:0007669"/>
    <property type="project" value="UniProtKB-KW"/>
</dbReference>
<dbReference type="GO" id="GO:0070040">
    <property type="term" value="F:rRNA (adenine(2503)-C2-)-methyltransferase activity"/>
    <property type="evidence" value="ECO:0007669"/>
    <property type="project" value="UniProtKB-UniRule"/>
</dbReference>
<dbReference type="GO" id="GO:0019843">
    <property type="term" value="F:rRNA binding"/>
    <property type="evidence" value="ECO:0007669"/>
    <property type="project" value="UniProtKB-UniRule"/>
</dbReference>
<dbReference type="GO" id="GO:0002935">
    <property type="term" value="F:tRNA (adenine(37)-C2)-methyltransferase activity"/>
    <property type="evidence" value="ECO:0007669"/>
    <property type="project" value="UniProtKB-UniRule"/>
</dbReference>
<dbReference type="GO" id="GO:0000049">
    <property type="term" value="F:tRNA binding"/>
    <property type="evidence" value="ECO:0007669"/>
    <property type="project" value="UniProtKB-UniRule"/>
</dbReference>
<dbReference type="GO" id="GO:0070475">
    <property type="term" value="P:rRNA base methylation"/>
    <property type="evidence" value="ECO:0007669"/>
    <property type="project" value="UniProtKB-UniRule"/>
</dbReference>
<dbReference type="GO" id="GO:0030488">
    <property type="term" value="P:tRNA methylation"/>
    <property type="evidence" value="ECO:0007669"/>
    <property type="project" value="UniProtKB-UniRule"/>
</dbReference>
<dbReference type="CDD" id="cd01335">
    <property type="entry name" value="Radical_SAM"/>
    <property type="match status" value="1"/>
</dbReference>
<dbReference type="FunFam" id="1.10.150.530:FF:000003">
    <property type="entry name" value="Dual-specificity RNA methyltransferase RlmN"/>
    <property type="match status" value="1"/>
</dbReference>
<dbReference type="FunFam" id="3.20.20.70:FF:000008">
    <property type="entry name" value="Dual-specificity RNA methyltransferase RlmN"/>
    <property type="match status" value="1"/>
</dbReference>
<dbReference type="Gene3D" id="1.10.150.530">
    <property type="match status" value="1"/>
</dbReference>
<dbReference type="Gene3D" id="3.20.20.70">
    <property type="entry name" value="Aldolase class I"/>
    <property type="match status" value="1"/>
</dbReference>
<dbReference type="HAMAP" id="MF_01849">
    <property type="entry name" value="RNA_methyltr_RlmN"/>
    <property type="match status" value="1"/>
</dbReference>
<dbReference type="InterPro" id="IPR013785">
    <property type="entry name" value="Aldolase_TIM"/>
</dbReference>
<dbReference type="InterPro" id="IPR040072">
    <property type="entry name" value="Methyltransferase_A"/>
</dbReference>
<dbReference type="InterPro" id="IPR048641">
    <property type="entry name" value="RlmN_N"/>
</dbReference>
<dbReference type="InterPro" id="IPR027492">
    <property type="entry name" value="RNA_MTrfase_RlmN"/>
</dbReference>
<dbReference type="InterPro" id="IPR004383">
    <property type="entry name" value="rRNA_lsu_MTrfase_RlmN/Cfr"/>
</dbReference>
<dbReference type="InterPro" id="IPR007197">
    <property type="entry name" value="rSAM"/>
</dbReference>
<dbReference type="NCBIfam" id="TIGR00048">
    <property type="entry name" value="rRNA_mod_RlmN"/>
    <property type="match status" value="1"/>
</dbReference>
<dbReference type="PANTHER" id="PTHR30544">
    <property type="entry name" value="23S RRNA METHYLTRANSFERASE"/>
    <property type="match status" value="1"/>
</dbReference>
<dbReference type="PANTHER" id="PTHR30544:SF5">
    <property type="entry name" value="RADICAL SAM CORE DOMAIN-CONTAINING PROTEIN"/>
    <property type="match status" value="1"/>
</dbReference>
<dbReference type="Pfam" id="PF04055">
    <property type="entry name" value="Radical_SAM"/>
    <property type="match status" value="1"/>
</dbReference>
<dbReference type="Pfam" id="PF21016">
    <property type="entry name" value="RlmN_N"/>
    <property type="match status" value="1"/>
</dbReference>
<dbReference type="PIRSF" id="PIRSF006004">
    <property type="entry name" value="CHP00048"/>
    <property type="match status" value="1"/>
</dbReference>
<dbReference type="SFLD" id="SFLDF00275">
    <property type="entry name" value="adenosine_C2_methyltransferase"/>
    <property type="match status" value="1"/>
</dbReference>
<dbReference type="SFLD" id="SFLDS00029">
    <property type="entry name" value="Radical_SAM"/>
    <property type="match status" value="1"/>
</dbReference>
<dbReference type="SUPFAM" id="SSF102114">
    <property type="entry name" value="Radical SAM enzymes"/>
    <property type="match status" value="1"/>
</dbReference>
<dbReference type="PROSITE" id="PS51918">
    <property type="entry name" value="RADICAL_SAM"/>
    <property type="match status" value="1"/>
</dbReference>